<accession>Q47N40</accession>
<organism>
    <name type="scientific">Thermobifida fusca (strain YX)</name>
    <dbReference type="NCBI Taxonomy" id="269800"/>
    <lineage>
        <taxon>Bacteria</taxon>
        <taxon>Bacillati</taxon>
        <taxon>Actinomycetota</taxon>
        <taxon>Actinomycetes</taxon>
        <taxon>Streptosporangiales</taxon>
        <taxon>Nocardiopsidaceae</taxon>
        <taxon>Thermobifida</taxon>
    </lineage>
</organism>
<reference key="1">
    <citation type="journal article" date="2007" name="J. Bacteriol.">
        <title>Genome sequence and analysis of the soil cellulolytic actinomycete Thermobifida fusca YX.</title>
        <authorList>
            <person name="Lykidis A."/>
            <person name="Mavromatis K."/>
            <person name="Ivanova N."/>
            <person name="Anderson I."/>
            <person name="Land M."/>
            <person name="DiBartolo G."/>
            <person name="Martinez M."/>
            <person name="Lapidus A."/>
            <person name="Lucas S."/>
            <person name="Copeland A."/>
            <person name="Richardson P."/>
            <person name="Wilson D.B."/>
            <person name="Kyrpides N."/>
        </authorList>
    </citation>
    <scope>NUCLEOTIDE SEQUENCE [LARGE SCALE GENOMIC DNA]</scope>
    <source>
        <strain>YX</strain>
    </source>
</reference>
<gene>
    <name type="ordered locus">Tfu_2096</name>
</gene>
<feature type="chain" id="PRO_0000257153" description="Probable transcriptional regulatory protein Tfu_2096">
    <location>
        <begin position="1"/>
        <end position="249"/>
    </location>
</feature>
<protein>
    <recommendedName>
        <fullName evidence="1">Probable transcriptional regulatory protein Tfu_2096</fullName>
    </recommendedName>
</protein>
<proteinExistence type="inferred from homology"/>
<dbReference type="EMBL" id="CP000088">
    <property type="protein sequence ID" value="AAZ56129.1"/>
    <property type="molecule type" value="Genomic_DNA"/>
</dbReference>
<dbReference type="RefSeq" id="WP_011292519.1">
    <property type="nucleotide sequence ID" value="NC_007333.1"/>
</dbReference>
<dbReference type="SMR" id="Q47N40"/>
<dbReference type="STRING" id="269800.Tfu_2096"/>
<dbReference type="KEGG" id="tfu:Tfu_2096"/>
<dbReference type="eggNOG" id="COG0217">
    <property type="taxonomic scope" value="Bacteria"/>
</dbReference>
<dbReference type="HOGENOM" id="CLU_062974_2_2_11"/>
<dbReference type="OrthoDB" id="9781053at2"/>
<dbReference type="GO" id="GO:0005829">
    <property type="term" value="C:cytosol"/>
    <property type="evidence" value="ECO:0007669"/>
    <property type="project" value="TreeGrafter"/>
</dbReference>
<dbReference type="GO" id="GO:0003677">
    <property type="term" value="F:DNA binding"/>
    <property type="evidence" value="ECO:0007669"/>
    <property type="project" value="UniProtKB-UniRule"/>
</dbReference>
<dbReference type="GO" id="GO:0006355">
    <property type="term" value="P:regulation of DNA-templated transcription"/>
    <property type="evidence" value="ECO:0007669"/>
    <property type="project" value="UniProtKB-UniRule"/>
</dbReference>
<dbReference type="FunFam" id="1.10.10.200:FF:000002">
    <property type="entry name" value="Probable transcriptional regulatory protein CLM62_37755"/>
    <property type="match status" value="1"/>
</dbReference>
<dbReference type="FunFam" id="3.30.70.980:FF:000002">
    <property type="entry name" value="Probable transcriptional regulatory protein YebC"/>
    <property type="match status" value="1"/>
</dbReference>
<dbReference type="Gene3D" id="1.10.10.200">
    <property type="match status" value="1"/>
</dbReference>
<dbReference type="Gene3D" id="3.30.70.980">
    <property type="match status" value="2"/>
</dbReference>
<dbReference type="HAMAP" id="MF_00693">
    <property type="entry name" value="Transcrip_reg_TACO1"/>
    <property type="match status" value="1"/>
</dbReference>
<dbReference type="InterPro" id="IPR017856">
    <property type="entry name" value="Integrase-like_N"/>
</dbReference>
<dbReference type="InterPro" id="IPR048300">
    <property type="entry name" value="TACO1_YebC-like_2nd/3rd_dom"/>
</dbReference>
<dbReference type="InterPro" id="IPR049083">
    <property type="entry name" value="TACO1_YebC_N"/>
</dbReference>
<dbReference type="InterPro" id="IPR002876">
    <property type="entry name" value="Transcrip_reg_TACO1-like"/>
</dbReference>
<dbReference type="InterPro" id="IPR026564">
    <property type="entry name" value="Transcrip_reg_TACO1-like_dom3"/>
</dbReference>
<dbReference type="InterPro" id="IPR029072">
    <property type="entry name" value="YebC-like"/>
</dbReference>
<dbReference type="NCBIfam" id="NF001030">
    <property type="entry name" value="PRK00110.1"/>
    <property type="match status" value="1"/>
</dbReference>
<dbReference type="NCBIfam" id="NF009044">
    <property type="entry name" value="PRK12378.1"/>
    <property type="match status" value="1"/>
</dbReference>
<dbReference type="NCBIfam" id="TIGR01033">
    <property type="entry name" value="YebC/PmpR family DNA-binding transcriptional regulator"/>
    <property type="match status" value="1"/>
</dbReference>
<dbReference type="PANTHER" id="PTHR12532:SF6">
    <property type="entry name" value="TRANSCRIPTIONAL REGULATORY PROTEIN YEBC-RELATED"/>
    <property type="match status" value="1"/>
</dbReference>
<dbReference type="PANTHER" id="PTHR12532">
    <property type="entry name" value="TRANSLATIONAL ACTIVATOR OF CYTOCHROME C OXIDASE 1"/>
    <property type="match status" value="1"/>
</dbReference>
<dbReference type="Pfam" id="PF20772">
    <property type="entry name" value="TACO1_YebC_N"/>
    <property type="match status" value="1"/>
</dbReference>
<dbReference type="Pfam" id="PF01709">
    <property type="entry name" value="Transcrip_reg"/>
    <property type="match status" value="1"/>
</dbReference>
<dbReference type="SUPFAM" id="SSF75625">
    <property type="entry name" value="YebC-like"/>
    <property type="match status" value="1"/>
</dbReference>
<keyword id="KW-0963">Cytoplasm</keyword>
<keyword id="KW-0238">DNA-binding</keyword>
<keyword id="KW-0804">Transcription</keyword>
<keyword id="KW-0805">Transcription regulation</keyword>
<comment type="subcellular location">
    <subcellularLocation>
        <location evidence="1">Cytoplasm</location>
    </subcellularLocation>
</comment>
<comment type="similarity">
    <text evidence="1">Belongs to the TACO1 family.</text>
</comment>
<evidence type="ECO:0000255" key="1">
    <source>
        <dbReference type="HAMAP-Rule" id="MF_00693"/>
    </source>
</evidence>
<name>Y2096_THEFY</name>
<sequence>MAGHSKWATTKHKKAVIDARRGKLFAKLIKNIEVAARTGGGDPDGNPTLYDAIQKAKKNSVPLDNIERARKRGAGEEAGGADWETIMYEGYAPGGVALLVECLTDNRNRAASEVRVAVTRNGGSMADAGSVSYLFNRKGLVVVPKEGTTEDDVTLAVLDAGAEDVNDVGEAFEVICEPSDLVAVRTALQEAGIEYESAELSFIPSVEVPLDEEGARKVMRLVDALEDSDDVQNVYTNADIPDEIMAKIS</sequence>